<gene>
    <name evidence="1" type="primary">rplX</name>
    <name type="ordered locus">Cbei_0162</name>
</gene>
<proteinExistence type="inferred from homology"/>
<accession>A6LPS2</accession>
<name>RL24_CLOB8</name>
<dbReference type="EMBL" id="CP000721">
    <property type="protein sequence ID" value="ABR32352.1"/>
    <property type="molecule type" value="Genomic_DNA"/>
</dbReference>
<dbReference type="RefSeq" id="WP_011967519.1">
    <property type="nucleotide sequence ID" value="NC_009617.1"/>
</dbReference>
<dbReference type="SMR" id="A6LPS2"/>
<dbReference type="GeneID" id="66343052"/>
<dbReference type="KEGG" id="cbe:Cbei_0162"/>
<dbReference type="eggNOG" id="COG0198">
    <property type="taxonomic scope" value="Bacteria"/>
</dbReference>
<dbReference type="HOGENOM" id="CLU_093315_2_3_9"/>
<dbReference type="Proteomes" id="UP000000565">
    <property type="component" value="Chromosome"/>
</dbReference>
<dbReference type="GO" id="GO:1990904">
    <property type="term" value="C:ribonucleoprotein complex"/>
    <property type="evidence" value="ECO:0007669"/>
    <property type="project" value="UniProtKB-KW"/>
</dbReference>
<dbReference type="GO" id="GO:0005840">
    <property type="term" value="C:ribosome"/>
    <property type="evidence" value="ECO:0007669"/>
    <property type="project" value="UniProtKB-KW"/>
</dbReference>
<dbReference type="GO" id="GO:0019843">
    <property type="term" value="F:rRNA binding"/>
    <property type="evidence" value="ECO:0007669"/>
    <property type="project" value="UniProtKB-UniRule"/>
</dbReference>
<dbReference type="GO" id="GO:0003735">
    <property type="term" value="F:structural constituent of ribosome"/>
    <property type="evidence" value="ECO:0007669"/>
    <property type="project" value="InterPro"/>
</dbReference>
<dbReference type="GO" id="GO:0006412">
    <property type="term" value="P:translation"/>
    <property type="evidence" value="ECO:0007669"/>
    <property type="project" value="UniProtKB-UniRule"/>
</dbReference>
<dbReference type="CDD" id="cd06089">
    <property type="entry name" value="KOW_RPL26"/>
    <property type="match status" value="1"/>
</dbReference>
<dbReference type="FunFam" id="2.30.30.30:FF:000004">
    <property type="entry name" value="50S ribosomal protein L24"/>
    <property type="match status" value="1"/>
</dbReference>
<dbReference type="Gene3D" id="2.30.30.30">
    <property type="match status" value="1"/>
</dbReference>
<dbReference type="HAMAP" id="MF_01326_B">
    <property type="entry name" value="Ribosomal_uL24_B"/>
    <property type="match status" value="1"/>
</dbReference>
<dbReference type="InterPro" id="IPR005824">
    <property type="entry name" value="KOW"/>
</dbReference>
<dbReference type="InterPro" id="IPR014722">
    <property type="entry name" value="Rib_uL2_dom2"/>
</dbReference>
<dbReference type="InterPro" id="IPR003256">
    <property type="entry name" value="Ribosomal_uL24"/>
</dbReference>
<dbReference type="InterPro" id="IPR005825">
    <property type="entry name" value="Ribosomal_uL24_CS"/>
</dbReference>
<dbReference type="InterPro" id="IPR041988">
    <property type="entry name" value="Ribosomal_uL24_KOW"/>
</dbReference>
<dbReference type="InterPro" id="IPR008991">
    <property type="entry name" value="Translation_prot_SH3-like_sf"/>
</dbReference>
<dbReference type="NCBIfam" id="TIGR01079">
    <property type="entry name" value="rplX_bact"/>
    <property type="match status" value="1"/>
</dbReference>
<dbReference type="PANTHER" id="PTHR12903">
    <property type="entry name" value="MITOCHONDRIAL RIBOSOMAL PROTEIN L24"/>
    <property type="match status" value="1"/>
</dbReference>
<dbReference type="Pfam" id="PF00467">
    <property type="entry name" value="KOW"/>
    <property type="match status" value="1"/>
</dbReference>
<dbReference type="Pfam" id="PF17136">
    <property type="entry name" value="ribosomal_L24"/>
    <property type="match status" value="1"/>
</dbReference>
<dbReference type="SMART" id="SM00739">
    <property type="entry name" value="KOW"/>
    <property type="match status" value="1"/>
</dbReference>
<dbReference type="SUPFAM" id="SSF50104">
    <property type="entry name" value="Translation proteins SH3-like domain"/>
    <property type="match status" value="1"/>
</dbReference>
<dbReference type="PROSITE" id="PS01108">
    <property type="entry name" value="RIBOSOMAL_L24"/>
    <property type="match status" value="1"/>
</dbReference>
<feature type="chain" id="PRO_0000355656" description="Large ribosomal subunit protein uL24">
    <location>
        <begin position="1"/>
        <end position="104"/>
    </location>
</feature>
<protein>
    <recommendedName>
        <fullName evidence="1">Large ribosomal subunit protein uL24</fullName>
    </recommendedName>
    <alternativeName>
        <fullName evidence="2">50S ribosomal protein L24</fullName>
    </alternativeName>
</protein>
<keyword id="KW-0687">Ribonucleoprotein</keyword>
<keyword id="KW-0689">Ribosomal protein</keyword>
<keyword id="KW-0694">RNA-binding</keyword>
<keyword id="KW-0699">rRNA-binding</keyword>
<comment type="function">
    <text evidence="1">One of two assembly initiator proteins, it binds directly to the 5'-end of the 23S rRNA, where it nucleates assembly of the 50S subunit.</text>
</comment>
<comment type="function">
    <text evidence="1">One of the proteins that surrounds the polypeptide exit tunnel on the outside of the subunit.</text>
</comment>
<comment type="subunit">
    <text evidence="1">Part of the 50S ribosomal subunit.</text>
</comment>
<comment type="similarity">
    <text evidence="1">Belongs to the universal ribosomal protein uL24 family.</text>
</comment>
<organism>
    <name type="scientific">Clostridium beijerinckii (strain ATCC 51743 / NCIMB 8052)</name>
    <name type="common">Clostridium acetobutylicum</name>
    <dbReference type="NCBI Taxonomy" id="290402"/>
    <lineage>
        <taxon>Bacteria</taxon>
        <taxon>Bacillati</taxon>
        <taxon>Bacillota</taxon>
        <taxon>Clostridia</taxon>
        <taxon>Eubacteriales</taxon>
        <taxon>Clostridiaceae</taxon>
        <taxon>Clostridium</taxon>
    </lineage>
</organism>
<evidence type="ECO:0000255" key="1">
    <source>
        <dbReference type="HAMAP-Rule" id="MF_01326"/>
    </source>
</evidence>
<evidence type="ECO:0000305" key="2"/>
<reference key="1">
    <citation type="submission" date="2007-06" db="EMBL/GenBank/DDBJ databases">
        <title>Complete sequence of Clostridium beijerinckii NCIMB 8052.</title>
        <authorList>
            <consortium name="US DOE Joint Genome Institute"/>
            <person name="Copeland A."/>
            <person name="Lucas S."/>
            <person name="Lapidus A."/>
            <person name="Barry K."/>
            <person name="Detter J.C."/>
            <person name="Glavina del Rio T."/>
            <person name="Hammon N."/>
            <person name="Israni S."/>
            <person name="Dalin E."/>
            <person name="Tice H."/>
            <person name="Pitluck S."/>
            <person name="Sims D."/>
            <person name="Brettin T."/>
            <person name="Bruce D."/>
            <person name="Tapia R."/>
            <person name="Brainard J."/>
            <person name="Schmutz J."/>
            <person name="Larimer F."/>
            <person name="Land M."/>
            <person name="Hauser L."/>
            <person name="Kyrpides N."/>
            <person name="Mikhailova N."/>
            <person name="Bennet G."/>
            <person name="Cann I."/>
            <person name="Chen J.-S."/>
            <person name="Contreras A.L."/>
            <person name="Jones D."/>
            <person name="Kashket E."/>
            <person name="Mitchell W."/>
            <person name="Stoddard S."/>
            <person name="Schwarz W."/>
            <person name="Qureshi N."/>
            <person name="Young M."/>
            <person name="Shi Z."/>
            <person name="Ezeji T."/>
            <person name="White B."/>
            <person name="Blaschek H."/>
            <person name="Richardson P."/>
        </authorList>
    </citation>
    <scope>NUCLEOTIDE SEQUENCE [LARGE SCALE GENOMIC DNA]</scope>
    <source>
        <strain>ATCC 51743 / NCIMB 8052</strain>
    </source>
</reference>
<sequence>MKIHVRKNDTVIVISGKDKGKTGEVLKAYPKTGKVLVQGVNIVKKHQKANKGQVESAIIEKEAAINSSKVMLYCNKCKNATRISNKVLDDGTKVRVCKKCGETF</sequence>